<feature type="transit peptide" description="Chloroplast" evidence="4">
    <location>
        <begin position="1"/>
        <end status="unknown"/>
    </location>
</feature>
<feature type="chain" id="PRO_0000441068" description="Holliday junction resolvase MOC1, chloroplastic">
    <location>
        <begin status="unknown"/>
        <end position="882"/>
    </location>
</feature>
<feature type="region of interest" description="Disordered" evidence="2">
    <location>
        <begin position="87"/>
        <end position="148"/>
    </location>
</feature>
<feature type="region of interest" description="Disordered" evidence="2">
    <location>
        <begin position="323"/>
        <end position="351"/>
    </location>
</feature>
<feature type="region of interest" description="Disordered" evidence="2">
    <location>
        <begin position="710"/>
        <end position="882"/>
    </location>
</feature>
<feature type="compositionally biased region" description="Polar residues" evidence="2">
    <location>
        <begin position="91"/>
        <end position="111"/>
    </location>
</feature>
<feature type="compositionally biased region" description="Low complexity" evidence="2">
    <location>
        <begin position="112"/>
        <end position="125"/>
    </location>
</feature>
<feature type="compositionally biased region" description="Polar residues" evidence="2">
    <location>
        <begin position="134"/>
        <end position="148"/>
    </location>
</feature>
<feature type="compositionally biased region" description="Low complexity" evidence="2">
    <location>
        <begin position="323"/>
        <end position="337"/>
    </location>
</feature>
<feature type="compositionally biased region" description="Acidic residues" evidence="2">
    <location>
        <begin position="732"/>
        <end position="743"/>
    </location>
</feature>
<feature type="compositionally biased region" description="Low complexity" evidence="2">
    <location>
        <begin position="744"/>
        <end position="758"/>
    </location>
</feature>
<feature type="compositionally biased region" description="Low complexity" evidence="2">
    <location>
        <begin position="769"/>
        <end position="783"/>
    </location>
</feature>
<feature type="compositionally biased region" description="Low complexity" evidence="2">
    <location>
        <begin position="810"/>
        <end position="819"/>
    </location>
</feature>
<feature type="compositionally biased region" description="Low complexity" evidence="2">
    <location>
        <begin position="830"/>
        <end position="844"/>
    </location>
</feature>
<feature type="compositionally biased region" description="Gly residues" evidence="2">
    <location>
        <begin position="845"/>
        <end position="857"/>
    </location>
</feature>
<feature type="compositionally biased region" description="Gly residues" evidence="2">
    <location>
        <begin position="868"/>
        <end position="882"/>
    </location>
</feature>
<feature type="binding site" evidence="1">
    <location>
        <position position="397"/>
    </location>
    <ligand>
        <name>Mg(2+)</name>
        <dbReference type="ChEBI" id="CHEBI:18420"/>
    </ligand>
</feature>
<feature type="binding site" evidence="1">
    <location>
        <position position="552"/>
    </location>
    <ligand>
        <name>Mg(2+)</name>
        <dbReference type="ChEBI" id="CHEBI:18420"/>
    </ligand>
</feature>
<feature type="binding site" evidence="1">
    <location>
        <position position="629"/>
    </location>
    <ligand>
        <name>Mg(2+)</name>
        <dbReference type="ChEBI" id="CHEBI:18420"/>
    </ligand>
</feature>
<feature type="binding site" evidence="1">
    <location>
        <position position="634"/>
    </location>
    <ligand>
        <name>Mg(2+)</name>
        <dbReference type="ChEBI" id="CHEBI:18420"/>
    </ligand>
</feature>
<comment type="function">
    <text evidence="1 3">A structure-specific endonuclease that resolves Holliday junction (HJ) intermediates during genetic recombination. Cleaves 4-way DNA junctions introducing paired nicks in opposing strands, leaving a 5'-terminal phosphate and a 3'-terminal hydroxyl group that are ligated to produce recombinant products (By similarity). Mediates chloroplast nucleoid segregation during chloroplast division (PubMed:28495749).</text>
</comment>
<comment type="catalytic activity">
    <reaction evidence="5">
        <text>Endonucleolytic cleavage at a junction such as a reciprocal single-stranded crossover between two homologous DNA duplexes (Holliday junction).</text>
        <dbReference type="EC" id="3.1.21.10"/>
    </reaction>
</comment>
<comment type="cofactor">
    <cofactor evidence="1">
        <name>Mg(2+)</name>
        <dbReference type="ChEBI" id="CHEBI:18420"/>
    </cofactor>
    <cofactor evidence="1">
        <name>Mn(2+)</name>
        <dbReference type="ChEBI" id="CHEBI:29035"/>
    </cofactor>
</comment>
<comment type="subcellular location">
    <subcellularLocation>
        <location evidence="3">Plastid</location>
        <location evidence="3">Chloroplast</location>
    </subcellularLocation>
</comment>
<comment type="disruption phenotype">
    <text evidence="3">Defective in chloroplast nucleoid segregation during chloroplast divisions.</text>
</comment>
<comment type="sequence caution" evidence="5">
    <conflict type="erroneous translation">
        <sequence resource="EMBL-CDS" id="EDP04285"/>
    </conflict>
</comment>
<keyword id="KW-0150">Chloroplast</keyword>
<keyword id="KW-0233">DNA recombination</keyword>
<keyword id="KW-0238">DNA-binding</keyword>
<keyword id="KW-0255">Endonuclease</keyword>
<keyword id="KW-0378">Hydrolase</keyword>
<keyword id="KW-0460">Magnesium</keyword>
<keyword id="KW-0464">Manganese</keyword>
<keyword id="KW-0479">Metal-binding</keyword>
<keyword id="KW-0540">Nuclease</keyword>
<keyword id="KW-0934">Plastid</keyword>
<keyword id="KW-0809">Transit peptide</keyword>
<sequence length="882" mass="85331">MRVLGFLSSHAGTGTAAAHTRWRWLAPLGIQAIRPASASAGGNAVSSATPQAPPCPIHANVGVGRASALGPGPSGFMAPSAGIVTAIRDGPNSNSRCSTVRTHATRSKSTGPSRATSSGPATAAPPRRRRRTSNDTQDGGLTSEQTPTNTAVAAVAATAAAAAGASASAAAPALPVALNPTWRTPPTAEAARRITQAASASAAYSGSSAAAAAAAVAAGPSSAASVARGGSAAAARSAAASALAANANTSSGAASAAAIAATASTAPGKLLLGGDLSRALAAAGSTTAPPLPLPSRAGLSAPKHTASAAAAAAAAASVLPASTPAAASQTPPTTVTSCGTGSGAPATPRAARSPTAAVSVSSADAAAAAAAAAAPASAAATAAAAVLPTRHIVAAVDPDLNGALALIYWDEDPNDPTTATASGPAAATTDAAAAAAAAAAAATGPAARLATLAAAAPPGSGAAAAADEAAAAALLWLPTPPRPPADASRWRVCVWDMPVSAAERQKRTASGQVARRRLLHVAGARAVLSAALAAALPPPGEARPVALYGYVEVPPILPGDGNIAAYTSLWSTGSWLGLLTGMGFTVGSTPVRRWKTDLGLYGAKGKDASLALARALFPGQQPILRHKKNHGRADALLIAAWALGACLPRGLGASLRRNGITLDQLLQQQPGTTVGLVWGPPRPPAPTDAYGNLLTPEQDMWDEIEAAETKVERKAQARSSTARRRKTAGTQEEPEAQAEEEQAEAGTGVVAAAAGAAAPKRRRAKKAAVESGSEAAVAEVAAGPQEEGSEGEVAGQGGRACRSKSRSKSSGKSSSKAEAGGAGSGRRRAASVGSSSVGSSSVGSSSGGGGGGGGGVKAPGASRRRGGAKAGSDGGVSGSESE</sequence>
<evidence type="ECO:0000250" key="1">
    <source>
        <dbReference type="UniProtKB" id="Q8GWA2"/>
    </source>
</evidence>
<evidence type="ECO:0000256" key="2">
    <source>
        <dbReference type="SAM" id="MobiDB-lite"/>
    </source>
</evidence>
<evidence type="ECO:0000269" key="3">
    <source>
    </source>
</evidence>
<evidence type="ECO:0000303" key="4">
    <source>
    </source>
</evidence>
<evidence type="ECO:0000305" key="5"/>
<evidence type="ECO:0000312" key="6">
    <source>
        <dbReference type="EMBL" id="EDP04285.1"/>
    </source>
</evidence>
<name>MOC1_CHLRE</name>
<dbReference type="EC" id="3.1.21.10" evidence="5"/>
<dbReference type="EMBL" id="DS496122">
    <property type="protein sequence ID" value="EDP04285.1"/>
    <property type="status" value="ALT_SEQ"/>
    <property type="molecule type" value="Genomic_DNA"/>
</dbReference>
<dbReference type="SMR" id="A8ITB0"/>
<dbReference type="EnsemblPlants" id="PNW84022">
    <property type="protein sequence ID" value="PNW84022"/>
    <property type="gene ID" value="CHLRE_04g218000v5"/>
</dbReference>
<dbReference type="Gramene" id="PNW84022">
    <property type="protein sequence ID" value="PNW84022"/>
    <property type="gene ID" value="CHLRE_04g218000v5"/>
</dbReference>
<dbReference type="HOGENOM" id="CLU_224466_0_0_1"/>
<dbReference type="OrthoDB" id="1910737at2759"/>
<dbReference type="BRENDA" id="3.1.21.10">
    <property type="organism ID" value="1318"/>
</dbReference>
<dbReference type="GO" id="GO:0009507">
    <property type="term" value="C:chloroplast"/>
    <property type="evidence" value="ECO:0000314"/>
    <property type="project" value="UniProtKB"/>
</dbReference>
<dbReference type="GO" id="GO:0008821">
    <property type="term" value="F:crossover junction DNA endonuclease activity"/>
    <property type="evidence" value="ECO:0007669"/>
    <property type="project" value="InterPro"/>
</dbReference>
<dbReference type="GO" id="GO:0003677">
    <property type="term" value="F:DNA binding"/>
    <property type="evidence" value="ECO:0007669"/>
    <property type="project" value="UniProtKB-KW"/>
</dbReference>
<dbReference type="GO" id="GO:0046872">
    <property type="term" value="F:metal ion binding"/>
    <property type="evidence" value="ECO:0007669"/>
    <property type="project" value="UniProtKB-KW"/>
</dbReference>
<dbReference type="GO" id="GO:0006310">
    <property type="term" value="P:DNA recombination"/>
    <property type="evidence" value="ECO:0007669"/>
    <property type="project" value="UniProtKB-KW"/>
</dbReference>
<dbReference type="GO" id="GO:0090143">
    <property type="term" value="P:nucleoid organization"/>
    <property type="evidence" value="ECO:0000315"/>
    <property type="project" value="UniProtKB"/>
</dbReference>
<dbReference type="InterPro" id="IPR045290">
    <property type="entry name" value="MOC1-like"/>
</dbReference>
<dbReference type="PANTHER" id="PTHR36015">
    <property type="entry name" value="HOLLIDAY JUNCTION RESOLVASE MOC1, CHLOROPLASTIC-RELATED"/>
    <property type="match status" value="1"/>
</dbReference>
<dbReference type="PANTHER" id="PTHR36015:SF6">
    <property type="entry name" value="HOLLIDAY JUNCTION RESOLVASE MOC1, CHLOROPLASTIC-RELATED"/>
    <property type="match status" value="1"/>
</dbReference>
<organism>
    <name type="scientific">Chlamydomonas reinhardtii</name>
    <name type="common">Chlamydomonas smithii</name>
    <dbReference type="NCBI Taxonomy" id="3055"/>
    <lineage>
        <taxon>Eukaryota</taxon>
        <taxon>Viridiplantae</taxon>
        <taxon>Chlorophyta</taxon>
        <taxon>core chlorophytes</taxon>
        <taxon>Chlorophyceae</taxon>
        <taxon>CS clade</taxon>
        <taxon>Chlamydomonadales</taxon>
        <taxon>Chlamydomonadaceae</taxon>
        <taxon>Chlamydomonas</taxon>
    </lineage>
</organism>
<proteinExistence type="inferred from homology"/>
<gene>
    <name evidence="4" type="primary">MOC1</name>
    <name evidence="4" type="synonym">MOCH72</name>
    <name evidence="6" type="ORF">CHLREDRAFT_171080</name>
    <name evidence="4" type="ORF">Cre04.g21800</name>
</gene>
<reference key="1">
    <citation type="journal article" date="2017" name="Science">
        <title>Holliday junction resolvases mediate chloroplast nucleoid segregation.</title>
        <authorList>
            <person name="Kobayashi Y."/>
            <person name="Misumi O."/>
            <person name="Odahara M."/>
            <person name="Ishibashi K."/>
            <person name="Hirono M."/>
            <person name="Hidaka K."/>
            <person name="Endo M."/>
            <person name="Sugiyama H."/>
            <person name="Iwasaki H."/>
            <person name="Kuroiwa T."/>
            <person name="Shikanai T."/>
            <person name="Nishimura Y."/>
        </authorList>
    </citation>
    <scope>IDENTIFICATION</scope>
    <scope>FUNCTION</scope>
    <scope>DISRUPTION PHENOTYPE</scope>
    <scope>SUBCELLULAR LOCATION</scope>
    <source>
        <strain>137c / CC-125</strain>
    </source>
</reference>
<reference key="2">
    <citation type="journal article" date="2007" name="Science">
        <title>The Chlamydomonas genome reveals the evolution of key animal and plant functions.</title>
        <authorList>
            <person name="Merchant S.S."/>
            <person name="Prochnik S.E."/>
            <person name="Vallon O."/>
            <person name="Harris E.H."/>
            <person name="Karpowicz S.J."/>
            <person name="Witman G.B."/>
            <person name="Terry A."/>
            <person name="Salamov A."/>
            <person name="Fritz-Laylin L.K."/>
            <person name="Marechal-Drouard L."/>
            <person name="Marshall W.F."/>
            <person name="Qu L.H."/>
            <person name="Nelson D.R."/>
            <person name="Sanderfoot A.A."/>
            <person name="Spalding M.H."/>
            <person name="Kapitonov V.V."/>
            <person name="Ren Q."/>
            <person name="Ferris P."/>
            <person name="Lindquist E."/>
            <person name="Shapiro H."/>
            <person name="Lucas S.M."/>
            <person name="Grimwood J."/>
            <person name="Schmutz J."/>
            <person name="Cardol P."/>
            <person name="Cerutti H."/>
            <person name="Chanfreau G."/>
            <person name="Chen C.L."/>
            <person name="Cognat V."/>
            <person name="Croft M.T."/>
            <person name="Dent R."/>
            <person name="Dutcher S."/>
            <person name="Fernandez E."/>
            <person name="Fukuzawa H."/>
            <person name="Gonzalez-Ballester D."/>
            <person name="Gonzalez-Halphen D."/>
            <person name="Hallmann A."/>
            <person name="Hanikenne M."/>
            <person name="Hippler M."/>
            <person name="Inwood W."/>
            <person name="Jabbari K."/>
            <person name="Kalanon M."/>
            <person name="Kuras R."/>
            <person name="Lefebvre P.A."/>
            <person name="Lemaire S.D."/>
            <person name="Lobanov A.V."/>
            <person name="Lohr M."/>
            <person name="Manuell A."/>
            <person name="Meier I."/>
            <person name="Mets L."/>
            <person name="Mittag M."/>
            <person name="Mittelmeier T."/>
            <person name="Moroney J.V."/>
            <person name="Moseley J."/>
            <person name="Napoli C."/>
            <person name="Nedelcu A.M."/>
            <person name="Niyogi K."/>
            <person name="Novoselov S.V."/>
            <person name="Paulsen I.T."/>
            <person name="Pazour G.J."/>
            <person name="Purton S."/>
            <person name="Ral J.P."/>
            <person name="Riano-Pachon D.M."/>
            <person name="Riekhof W."/>
            <person name="Rymarquis L."/>
            <person name="Schroda M."/>
            <person name="Stern D."/>
            <person name="Umen J."/>
            <person name="Willows R."/>
            <person name="Wilson N."/>
            <person name="Zimmer S.L."/>
            <person name="Allmer J."/>
            <person name="Balk J."/>
            <person name="Bisova K."/>
            <person name="Chen C.J."/>
            <person name="Elias M."/>
            <person name="Gendler K."/>
            <person name="Hauser C."/>
            <person name="Lamb M.R."/>
            <person name="Ledford H."/>
            <person name="Long J.C."/>
            <person name="Minagawa J."/>
            <person name="Page M.D."/>
            <person name="Pan J."/>
            <person name="Pootakham W."/>
            <person name="Roje S."/>
            <person name="Rose A."/>
            <person name="Stahlberg E."/>
            <person name="Terauchi A.M."/>
            <person name="Yang P."/>
            <person name="Ball S."/>
            <person name="Bowler C."/>
            <person name="Dieckmann C.L."/>
            <person name="Gladyshev V.N."/>
            <person name="Green P."/>
            <person name="Jorgensen R."/>
            <person name="Mayfield S."/>
            <person name="Mueller-Roeber B."/>
            <person name="Rajamani S."/>
            <person name="Sayre R.T."/>
            <person name="Brokstein P."/>
            <person name="Dubchak I."/>
            <person name="Goodstein D."/>
            <person name="Hornick L."/>
            <person name="Huang Y.W."/>
            <person name="Jhaveri J."/>
            <person name="Luo Y."/>
            <person name="Martinez D."/>
            <person name="Ngau W.C."/>
            <person name="Otillar B."/>
            <person name="Poliakov A."/>
            <person name="Porter A."/>
            <person name="Szajkowski L."/>
            <person name="Werner G."/>
            <person name="Zhou K."/>
            <person name="Grigoriev I.V."/>
            <person name="Rokhsar D.S."/>
            <person name="Grossman A.R."/>
        </authorList>
    </citation>
    <scope>NUCLEOTIDE SEQUENCE [LARGE SCALE GENOMIC DNA]</scope>
    <source>
        <strain>CC-503</strain>
    </source>
</reference>
<accession>A8ITB0</accession>
<protein>
    <recommendedName>
        <fullName evidence="5">Holliday junction resolvase MOC1, chloroplastic</fullName>
        <ecNumber evidence="5">3.1.21.10</ecNumber>
    </recommendedName>
    <alternativeName>
        <fullName evidence="4">Protein MONOKARYOTIC CHLOROPLAST 1</fullName>
        <shortName evidence="4">CreMOC1</shortName>
    </alternativeName>
</protein>